<sequence length="379" mass="41279">MAKRDYYEVLGVSRDAEEREIKKAYKRLAMKFHPDRKSEDKNAEEKFKEAKEAYEILTDAQKRAAYDQYGHAAFEQGGMGGGGFGGGGGGADFSDIFGDVFGDIFGGGRRQQRASRGSDLRYNMDLTLEEAVRGVTKEIRIPTLDECDVCHGSGAKPGSSPVTCPTCHGAGQVQMRQGFFTVQQACPHCHGRGQIIKDPCNKCHGHGRVEKSKTLSVKIPAGVDTGDRIRLSGEGEAGEHGAPSGDLYVQVQVKAHPIFEREGNNLYCEVPINFAMAALGGEIEVPTLDGRVKLKIPAETQTGKMFRMRGKGVKSVRGGSQGDLLCRVVVETPVSLSEKQKQLLRELEESFVGAAGEKNSPRAKSFLDGVKKFFDDLTR</sequence>
<dbReference type="EMBL" id="CP000720">
    <property type="protein sequence ID" value="ABS49819.1"/>
    <property type="molecule type" value="Genomic_DNA"/>
</dbReference>
<dbReference type="RefSeq" id="WP_012105697.1">
    <property type="nucleotide sequence ID" value="NC_009708.1"/>
</dbReference>
<dbReference type="SMR" id="A7FME2"/>
<dbReference type="KEGG" id="ypi:YpsIP31758_3465"/>
<dbReference type="HOGENOM" id="CLU_017633_0_7_6"/>
<dbReference type="Proteomes" id="UP000002412">
    <property type="component" value="Chromosome"/>
</dbReference>
<dbReference type="GO" id="GO:0005737">
    <property type="term" value="C:cytoplasm"/>
    <property type="evidence" value="ECO:0007669"/>
    <property type="project" value="UniProtKB-SubCell"/>
</dbReference>
<dbReference type="GO" id="GO:0005524">
    <property type="term" value="F:ATP binding"/>
    <property type="evidence" value="ECO:0007669"/>
    <property type="project" value="InterPro"/>
</dbReference>
<dbReference type="GO" id="GO:0031072">
    <property type="term" value="F:heat shock protein binding"/>
    <property type="evidence" value="ECO:0007669"/>
    <property type="project" value="InterPro"/>
</dbReference>
<dbReference type="GO" id="GO:0051082">
    <property type="term" value="F:unfolded protein binding"/>
    <property type="evidence" value="ECO:0007669"/>
    <property type="project" value="UniProtKB-UniRule"/>
</dbReference>
<dbReference type="GO" id="GO:0008270">
    <property type="term" value="F:zinc ion binding"/>
    <property type="evidence" value="ECO:0007669"/>
    <property type="project" value="UniProtKB-UniRule"/>
</dbReference>
<dbReference type="GO" id="GO:0051085">
    <property type="term" value="P:chaperone cofactor-dependent protein refolding"/>
    <property type="evidence" value="ECO:0007669"/>
    <property type="project" value="TreeGrafter"/>
</dbReference>
<dbReference type="GO" id="GO:0006260">
    <property type="term" value="P:DNA replication"/>
    <property type="evidence" value="ECO:0007669"/>
    <property type="project" value="UniProtKB-KW"/>
</dbReference>
<dbReference type="GO" id="GO:0042026">
    <property type="term" value="P:protein refolding"/>
    <property type="evidence" value="ECO:0007669"/>
    <property type="project" value="TreeGrafter"/>
</dbReference>
<dbReference type="GO" id="GO:0009408">
    <property type="term" value="P:response to heat"/>
    <property type="evidence" value="ECO:0007669"/>
    <property type="project" value="InterPro"/>
</dbReference>
<dbReference type="CDD" id="cd06257">
    <property type="entry name" value="DnaJ"/>
    <property type="match status" value="1"/>
</dbReference>
<dbReference type="CDD" id="cd10747">
    <property type="entry name" value="DnaJ_C"/>
    <property type="match status" value="1"/>
</dbReference>
<dbReference type="CDD" id="cd10719">
    <property type="entry name" value="DnaJ_zf"/>
    <property type="match status" value="1"/>
</dbReference>
<dbReference type="FunFam" id="1.10.287.110:FF:000003">
    <property type="entry name" value="Molecular chaperone DnaJ"/>
    <property type="match status" value="1"/>
</dbReference>
<dbReference type="FunFam" id="2.10.230.10:FF:000002">
    <property type="entry name" value="Molecular chaperone DnaJ"/>
    <property type="match status" value="1"/>
</dbReference>
<dbReference type="FunFam" id="2.60.260.20:FF:000004">
    <property type="entry name" value="Molecular chaperone DnaJ"/>
    <property type="match status" value="1"/>
</dbReference>
<dbReference type="Gene3D" id="1.10.287.110">
    <property type="entry name" value="DnaJ domain"/>
    <property type="match status" value="1"/>
</dbReference>
<dbReference type="Gene3D" id="2.10.230.10">
    <property type="entry name" value="Heat shock protein DnaJ, cysteine-rich domain"/>
    <property type="match status" value="1"/>
</dbReference>
<dbReference type="Gene3D" id="2.60.260.20">
    <property type="entry name" value="Urease metallochaperone UreE, N-terminal domain"/>
    <property type="match status" value="2"/>
</dbReference>
<dbReference type="HAMAP" id="MF_01152">
    <property type="entry name" value="DnaJ"/>
    <property type="match status" value="1"/>
</dbReference>
<dbReference type="InterPro" id="IPR012724">
    <property type="entry name" value="DnaJ"/>
</dbReference>
<dbReference type="InterPro" id="IPR002939">
    <property type="entry name" value="DnaJ_C"/>
</dbReference>
<dbReference type="InterPro" id="IPR001623">
    <property type="entry name" value="DnaJ_domain"/>
</dbReference>
<dbReference type="InterPro" id="IPR018253">
    <property type="entry name" value="DnaJ_domain_CS"/>
</dbReference>
<dbReference type="InterPro" id="IPR008971">
    <property type="entry name" value="HSP40/DnaJ_pept-bd"/>
</dbReference>
<dbReference type="InterPro" id="IPR001305">
    <property type="entry name" value="HSP_DnaJ_Cys-rich_dom"/>
</dbReference>
<dbReference type="InterPro" id="IPR036410">
    <property type="entry name" value="HSP_DnaJ_Cys-rich_dom_sf"/>
</dbReference>
<dbReference type="InterPro" id="IPR036869">
    <property type="entry name" value="J_dom_sf"/>
</dbReference>
<dbReference type="NCBIfam" id="TIGR02349">
    <property type="entry name" value="DnaJ_bact"/>
    <property type="match status" value="1"/>
</dbReference>
<dbReference type="NCBIfam" id="NF008035">
    <property type="entry name" value="PRK10767.1"/>
    <property type="match status" value="1"/>
</dbReference>
<dbReference type="PANTHER" id="PTHR43096:SF48">
    <property type="entry name" value="CHAPERONE PROTEIN DNAJ"/>
    <property type="match status" value="1"/>
</dbReference>
<dbReference type="PANTHER" id="PTHR43096">
    <property type="entry name" value="DNAJ HOMOLOG 1, MITOCHONDRIAL-RELATED"/>
    <property type="match status" value="1"/>
</dbReference>
<dbReference type="Pfam" id="PF00226">
    <property type="entry name" value="DnaJ"/>
    <property type="match status" value="1"/>
</dbReference>
<dbReference type="Pfam" id="PF01556">
    <property type="entry name" value="DnaJ_C"/>
    <property type="match status" value="1"/>
</dbReference>
<dbReference type="Pfam" id="PF00684">
    <property type="entry name" value="DnaJ_CXXCXGXG"/>
    <property type="match status" value="1"/>
</dbReference>
<dbReference type="PRINTS" id="PR00625">
    <property type="entry name" value="JDOMAIN"/>
</dbReference>
<dbReference type="SMART" id="SM00271">
    <property type="entry name" value="DnaJ"/>
    <property type="match status" value="1"/>
</dbReference>
<dbReference type="SUPFAM" id="SSF46565">
    <property type="entry name" value="Chaperone J-domain"/>
    <property type="match status" value="1"/>
</dbReference>
<dbReference type="SUPFAM" id="SSF57938">
    <property type="entry name" value="DnaJ/Hsp40 cysteine-rich domain"/>
    <property type="match status" value="1"/>
</dbReference>
<dbReference type="SUPFAM" id="SSF49493">
    <property type="entry name" value="HSP40/DnaJ peptide-binding domain"/>
    <property type="match status" value="2"/>
</dbReference>
<dbReference type="PROSITE" id="PS00636">
    <property type="entry name" value="DNAJ_1"/>
    <property type="match status" value="1"/>
</dbReference>
<dbReference type="PROSITE" id="PS50076">
    <property type="entry name" value="DNAJ_2"/>
    <property type="match status" value="1"/>
</dbReference>
<dbReference type="PROSITE" id="PS51188">
    <property type="entry name" value="ZF_CR"/>
    <property type="match status" value="1"/>
</dbReference>
<evidence type="ECO:0000255" key="1">
    <source>
        <dbReference type="HAMAP-Rule" id="MF_01152"/>
    </source>
</evidence>
<gene>
    <name evidence="1" type="primary">dnaJ</name>
    <name type="ordered locus">YpsIP31758_3465</name>
</gene>
<reference key="1">
    <citation type="journal article" date="2007" name="PLoS Genet.">
        <title>The complete genome sequence of Yersinia pseudotuberculosis IP31758, the causative agent of Far East scarlet-like fever.</title>
        <authorList>
            <person name="Eppinger M."/>
            <person name="Rosovitz M.J."/>
            <person name="Fricke W.F."/>
            <person name="Rasko D.A."/>
            <person name="Kokorina G."/>
            <person name="Fayolle C."/>
            <person name="Lindler L.E."/>
            <person name="Carniel E."/>
            <person name="Ravel J."/>
        </authorList>
    </citation>
    <scope>NUCLEOTIDE SEQUENCE [LARGE SCALE GENOMIC DNA]</scope>
    <source>
        <strain>IP 31758</strain>
    </source>
</reference>
<accession>A7FME2</accession>
<organism>
    <name type="scientific">Yersinia pseudotuberculosis serotype O:1b (strain IP 31758)</name>
    <dbReference type="NCBI Taxonomy" id="349747"/>
    <lineage>
        <taxon>Bacteria</taxon>
        <taxon>Pseudomonadati</taxon>
        <taxon>Pseudomonadota</taxon>
        <taxon>Gammaproteobacteria</taxon>
        <taxon>Enterobacterales</taxon>
        <taxon>Yersiniaceae</taxon>
        <taxon>Yersinia</taxon>
    </lineage>
</organism>
<keyword id="KW-0143">Chaperone</keyword>
<keyword id="KW-0963">Cytoplasm</keyword>
<keyword id="KW-0235">DNA replication</keyword>
<keyword id="KW-0479">Metal-binding</keyword>
<keyword id="KW-0677">Repeat</keyword>
<keyword id="KW-0346">Stress response</keyword>
<keyword id="KW-0862">Zinc</keyword>
<keyword id="KW-0863">Zinc-finger</keyword>
<name>DNAJ_YERP3</name>
<proteinExistence type="inferred from homology"/>
<comment type="function">
    <text evidence="1">Participates actively in the response to hyperosmotic and heat shock by preventing the aggregation of stress-denatured proteins and by disaggregating proteins, also in an autonomous, DnaK-independent fashion. Unfolded proteins bind initially to DnaJ; upon interaction with the DnaJ-bound protein, DnaK hydrolyzes its bound ATP, resulting in the formation of a stable complex. GrpE releases ADP from DnaK; ATP binding to DnaK triggers the release of the substrate protein, thus completing the reaction cycle. Several rounds of ATP-dependent interactions between DnaJ, DnaK and GrpE are required for fully efficient folding. Also involved, together with DnaK and GrpE, in the DNA replication of plasmids through activation of initiation proteins.</text>
</comment>
<comment type="cofactor">
    <cofactor evidence="1">
        <name>Zn(2+)</name>
        <dbReference type="ChEBI" id="CHEBI:29105"/>
    </cofactor>
    <text evidence="1">Binds 2 Zn(2+) ions per monomer.</text>
</comment>
<comment type="subunit">
    <text evidence="1">Homodimer.</text>
</comment>
<comment type="subcellular location">
    <subcellularLocation>
        <location evidence="1">Cytoplasm</location>
    </subcellularLocation>
</comment>
<comment type="domain">
    <text evidence="1">The J domain is necessary and sufficient to stimulate DnaK ATPase activity. Zinc center 1 plays an important role in the autonomous, DnaK-independent chaperone activity of DnaJ. Zinc center 2 is essential for interaction with DnaK and for DnaJ activity.</text>
</comment>
<comment type="similarity">
    <text evidence="1">Belongs to the DnaJ family.</text>
</comment>
<protein>
    <recommendedName>
        <fullName evidence="1">Chaperone protein DnaJ</fullName>
    </recommendedName>
</protein>
<feature type="chain" id="PRO_1000085333" description="Chaperone protein DnaJ">
    <location>
        <begin position="1"/>
        <end position="379"/>
    </location>
</feature>
<feature type="domain" description="J" evidence="1">
    <location>
        <begin position="5"/>
        <end position="70"/>
    </location>
</feature>
<feature type="repeat" description="CXXCXGXG motif">
    <location>
        <begin position="147"/>
        <end position="154"/>
    </location>
</feature>
<feature type="repeat" description="CXXCXGXG motif">
    <location>
        <begin position="164"/>
        <end position="171"/>
    </location>
</feature>
<feature type="repeat" description="CXXCXGXG motif">
    <location>
        <begin position="186"/>
        <end position="193"/>
    </location>
</feature>
<feature type="repeat" description="CXXCXGXG motif">
    <location>
        <begin position="200"/>
        <end position="207"/>
    </location>
</feature>
<feature type="zinc finger region" description="CR-type" evidence="1">
    <location>
        <begin position="134"/>
        <end position="212"/>
    </location>
</feature>
<feature type="binding site" evidence="1">
    <location>
        <position position="147"/>
    </location>
    <ligand>
        <name>Zn(2+)</name>
        <dbReference type="ChEBI" id="CHEBI:29105"/>
        <label>1</label>
    </ligand>
</feature>
<feature type="binding site" evidence="1">
    <location>
        <position position="150"/>
    </location>
    <ligand>
        <name>Zn(2+)</name>
        <dbReference type="ChEBI" id="CHEBI:29105"/>
        <label>1</label>
    </ligand>
</feature>
<feature type="binding site" evidence="1">
    <location>
        <position position="164"/>
    </location>
    <ligand>
        <name>Zn(2+)</name>
        <dbReference type="ChEBI" id="CHEBI:29105"/>
        <label>2</label>
    </ligand>
</feature>
<feature type="binding site" evidence="1">
    <location>
        <position position="167"/>
    </location>
    <ligand>
        <name>Zn(2+)</name>
        <dbReference type="ChEBI" id="CHEBI:29105"/>
        <label>2</label>
    </ligand>
</feature>
<feature type="binding site" evidence="1">
    <location>
        <position position="186"/>
    </location>
    <ligand>
        <name>Zn(2+)</name>
        <dbReference type="ChEBI" id="CHEBI:29105"/>
        <label>2</label>
    </ligand>
</feature>
<feature type="binding site" evidence="1">
    <location>
        <position position="189"/>
    </location>
    <ligand>
        <name>Zn(2+)</name>
        <dbReference type="ChEBI" id="CHEBI:29105"/>
        <label>2</label>
    </ligand>
</feature>
<feature type="binding site" evidence="1">
    <location>
        <position position="200"/>
    </location>
    <ligand>
        <name>Zn(2+)</name>
        <dbReference type="ChEBI" id="CHEBI:29105"/>
        <label>1</label>
    </ligand>
</feature>
<feature type="binding site" evidence="1">
    <location>
        <position position="203"/>
    </location>
    <ligand>
        <name>Zn(2+)</name>
        <dbReference type="ChEBI" id="CHEBI:29105"/>
        <label>1</label>
    </ligand>
</feature>